<name>MTHSD_BOVIN</name>
<reference key="1">
    <citation type="submission" date="2006-01" db="EMBL/GenBank/DDBJ databases">
        <authorList>
            <consortium name="NIH - Mammalian Gene Collection (MGC) project"/>
        </authorList>
    </citation>
    <scope>NUCLEOTIDE SEQUENCE [LARGE SCALE MRNA]</scope>
    <source>
        <strain>Hereford</strain>
        <tissue>Hypothalamus</tissue>
    </source>
</reference>
<organism>
    <name type="scientific">Bos taurus</name>
    <name type="common">Bovine</name>
    <dbReference type="NCBI Taxonomy" id="9913"/>
    <lineage>
        <taxon>Eukaryota</taxon>
        <taxon>Metazoa</taxon>
        <taxon>Chordata</taxon>
        <taxon>Craniata</taxon>
        <taxon>Vertebrata</taxon>
        <taxon>Euteleostomi</taxon>
        <taxon>Mammalia</taxon>
        <taxon>Eutheria</taxon>
        <taxon>Laurasiatheria</taxon>
        <taxon>Artiodactyla</taxon>
        <taxon>Ruminantia</taxon>
        <taxon>Pecora</taxon>
        <taxon>Bovidae</taxon>
        <taxon>Bovinae</taxon>
        <taxon>Bos</taxon>
    </lineage>
</organism>
<evidence type="ECO:0000255" key="1">
    <source>
        <dbReference type="PROSITE-ProRule" id="PRU00176"/>
    </source>
</evidence>
<evidence type="ECO:0000256" key="2">
    <source>
        <dbReference type="SAM" id="MobiDB-lite"/>
    </source>
</evidence>
<proteinExistence type="evidence at transcript level"/>
<protein>
    <recommendedName>
        <fullName>Methenyltetrahydrofolate synthase domain-containing protein</fullName>
    </recommendedName>
</protein>
<dbReference type="EMBL" id="BC112796">
    <property type="protein sequence ID" value="AAI12797.1"/>
    <property type="molecule type" value="mRNA"/>
</dbReference>
<dbReference type="RefSeq" id="NP_001039507.1">
    <property type="nucleotide sequence ID" value="NM_001046042.1"/>
</dbReference>
<dbReference type="SMR" id="Q2KI24"/>
<dbReference type="FunCoup" id="Q2KI24">
    <property type="interactions" value="3657"/>
</dbReference>
<dbReference type="STRING" id="9913.ENSBTAP00000070312"/>
<dbReference type="PaxDb" id="9913-ENSBTAP00000032495"/>
<dbReference type="GeneID" id="509897"/>
<dbReference type="KEGG" id="bta:509897"/>
<dbReference type="CTD" id="64779"/>
<dbReference type="VEuPathDB" id="HostDB:ENSBTAG00000012446"/>
<dbReference type="eggNOG" id="KOG4410">
    <property type="taxonomic scope" value="Eukaryota"/>
</dbReference>
<dbReference type="HOGENOM" id="CLU_031500_3_0_1"/>
<dbReference type="InParanoid" id="Q2KI24"/>
<dbReference type="OMA" id="VIRTECK"/>
<dbReference type="OrthoDB" id="433414at2759"/>
<dbReference type="TreeFam" id="TF324742"/>
<dbReference type="Proteomes" id="UP000009136">
    <property type="component" value="Chromosome 18"/>
</dbReference>
<dbReference type="Bgee" id="ENSBTAG00000012446">
    <property type="expression patterns" value="Expressed in laryngeal cartilage and 104 other cell types or tissues"/>
</dbReference>
<dbReference type="GO" id="GO:0005737">
    <property type="term" value="C:cytoplasm"/>
    <property type="evidence" value="ECO:0000318"/>
    <property type="project" value="GO_Central"/>
</dbReference>
<dbReference type="GO" id="GO:0003723">
    <property type="term" value="F:RNA binding"/>
    <property type="evidence" value="ECO:0007669"/>
    <property type="project" value="UniProtKB-KW"/>
</dbReference>
<dbReference type="FunFam" id="3.40.50.10420:FF:000001">
    <property type="entry name" value="Methenyltetrahydrofolate synthase domain-containing protein"/>
    <property type="match status" value="1"/>
</dbReference>
<dbReference type="FunFam" id="3.30.70.330:FF:000393">
    <property type="entry name" value="Methenyltetrahydrofolate synthetase domain containing"/>
    <property type="match status" value="1"/>
</dbReference>
<dbReference type="Gene3D" id="3.30.70.330">
    <property type="match status" value="1"/>
</dbReference>
<dbReference type="Gene3D" id="3.40.50.10420">
    <property type="entry name" value="NagB/RpiA/CoA transferase-like"/>
    <property type="match status" value="1"/>
</dbReference>
<dbReference type="InterPro" id="IPR002698">
    <property type="entry name" value="FTHF_cligase"/>
</dbReference>
<dbReference type="InterPro" id="IPR024185">
    <property type="entry name" value="FTHF_cligase-like_sf"/>
</dbReference>
<dbReference type="InterPro" id="IPR037171">
    <property type="entry name" value="NagB/RpiA_transferase-like"/>
</dbReference>
<dbReference type="InterPro" id="IPR012677">
    <property type="entry name" value="Nucleotide-bd_a/b_plait_sf"/>
</dbReference>
<dbReference type="InterPro" id="IPR035979">
    <property type="entry name" value="RBD_domain_sf"/>
</dbReference>
<dbReference type="InterPro" id="IPR000504">
    <property type="entry name" value="RRM_dom"/>
</dbReference>
<dbReference type="PANTHER" id="PTHR13017">
    <property type="entry name" value="5-FORMYLTETRAHYDROFOLATE CYCLO-LIGASE-RELATED"/>
    <property type="match status" value="1"/>
</dbReference>
<dbReference type="PANTHER" id="PTHR13017:SF0">
    <property type="entry name" value="METHENYLTETRAHYDROFOLATE SYNTHASE DOMAIN-CONTAINING PROTEIN"/>
    <property type="match status" value="1"/>
</dbReference>
<dbReference type="Pfam" id="PF01812">
    <property type="entry name" value="5-FTHF_cyc-lig"/>
    <property type="match status" value="1"/>
</dbReference>
<dbReference type="Pfam" id="PF00076">
    <property type="entry name" value="RRM_1"/>
    <property type="match status" value="1"/>
</dbReference>
<dbReference type="SMART" id="SM00360">
    <property type="entry name" value="RRM"/>
    <property type="match status" value="1"/>
</dbReference>
<dbReference type="SUPFAM" id="SSF100950">
    <property type="entry name" value="NagB/RpiA/CoA transferase-like"/>
    <property type="match status" value="1"/>
</dbReference>
<dbReference type="SUPFAM" id="SSF54928">
    <property type="entry name" value="RNA-binding domain, RBD"/>
    <property type="match status" value="1"/>
</dbReference>
<dbReference type="PROSITE" id="PS50102">
    <property type="entry name" value="RRM"/>
    <property type="match status" value="1"/>
</dbReference>
<sequence length="380" mass="41483">MEPRAGVSKQDIREQIWDYMESQNLADFPRPVHHRIPNFKGASRAAEHFPRLQAFKMARTIKVNPDAPQKNARFFVLESKKTLLVPTPRLRTGLFNKITPPPGATKDILRKCATSQGVRNYSTPVGLDSKVLVDLVVVGSVAVSEKGWRIGKGEGYADLEYAMMVSMGAVSQGTPVVTIVHDCQVVDIPEALLEDHDLTVDYILTPTRVITTGCERPKPAGIAWSKISCEMLGKMPILRSLRHQEEQAGKDVTLRDGPRSPPGATRSPRDLAPPELGSVPLSSVQIGNLPRDARVSELKRALSALGVAPSRLTWQGPQHGAFLHYRDPAEAQQAIACLQGFRLGANTVRVVLARQQRASDLVGSHTAEPLPDHQPAIAGP</sequence>
<gene>
    <name type="primary">MTHFSD</name>
</gene>
<keyword id="KW-1185">Reference proteome</keyword>
<keyword id="KW-0694">RNA-binding</keyword>
<feature type="chain" id="PRO_0000295870" description="Methenyltetrahydrofolate synthase domain-containing protein">
    <location>
        <begin position="1"/>
        <end position="380"/>
    </location>
</feature>
<feature type="domain" description="RRM" evidence="1">
    <location>
        <begin position="282"/>
        <end position="355"/>
    </location>
</feature>
<feature type="region of interest" description="Disordered" evidence="2">
    <location>
        <begin position="245"/>
        <end position="283"/>
    </location>
</feature>
<feature type="region of interest" description="Disordered" evidence="2">
    <location>
        <begin position="361"/>
        <end position="380"/>
    </location>
</feature>
<feature type="compositionally biased region" description="Basic and acidic residues" evidence="2">
    <location>
        <begin position="245"/>
        <end position="258"/>
    </location>
</feature>
<accession>Q2KI24</accession>